<reference key="1">
    <citation type="journal article" date="2007" name="J. Bacteriol.">
        <title>Genome sequence of Avery's virulent serotype 2 strain D39 of Streptococcus pneumoniae and comparison with that of unencapsulated laboratory strain R6.</title>
        <authorList>
            <person name="Lanie J.A."/>
            <person name="Ng W.-L."/>
            <person name="Kazmierczak K.M."/>
            <person name="Andrzejewski T.M."/>
            <person name="Davidsen T.M."/>
            <person name="Wayne K.J."/>
            <person name="Tettelin H."/>
            <person name="Glass J.I."/>
            <person name="Winkler M.E."/>
        </authorList>
    </citation>
    <scope>NUCLEOTIDE SEQUENCE [LARGE SCALE GENOMIC DNA]</scope>
    <source>
        <strain>D39 / NCTC 7466</strain>
    </source>
</reference>
<organism>
    <name type="scientific">Streptococcus pneumoniae serotype 2 (strain D39 / NCTC 7466)</name>
    <dbReference type="NCBI Taxonomy" id="373153"/>
    <lineage>
        <taxon>Bacteria</taxon>
        <taxon>Bacillati</taxon>
        <taxon>Bacillota</taxon>
        <taxon>Bacilli</taxon>
        <taxon>Lactobacillales</taxon>
        <taxon>Streptococcaceae</taxon>
        <taxon>Streptococcus</taxon>
    </lineage>
</organism>
<protein>
    <recommendedName>
        <fullName evidence="1">Large ribosomal subunit protein bL21</fullName>
    </recommendedName>
    <alternativeName>
        <fullName evidence="2">50S ribosomal protein L21</fullName>
    </alternativeName>
</protein>
<proteinExistence type="inferred from homology"/>
<dbReference type="EMBL" id="CP000410">
    <property type="protein sequence ID" value="ABJ55043.1"/>
    <property type="molecule type" value="Genomic_DNA"/>
</dbReference>
<dbReference type="RefSeq" id="WP_000109141.1">
    <property type="nucleotide sequence ID" value="NZ_JAMLJR010000014.1"/>
</dbReference>
<dbReference type="SMR" id="Q04KI4"/>
<dbReference type="PaxDb" id="373153-SPD_0989"/>
<dbReference type="GeneID" id="93739805"/>
<dbReference type="KEGG" id="spd:SPD_0989"/>
<dbReference type="eggNOG" id="COG0261">
    <property type="taxonomic scope" value="Bacteria"/>
</dbReference>
<dbReference type="HOGENOM" id="CLU_061463_3_1_9"/>
<dbReference type="BioCyc" id="SPNE373153:G1G6V-1080-MONOMER"/>
<dbReference type="Proteomes" id="UP000001452">
    <property type="component" value="Chromosome"/>
</dbReference>
<dbReference type="GO" id="GO:0005737">
    <property type="term" value="C:cytoplasm"/>
    <property type="evidence" value="ECO:0007669"/>
    <property type="project" value="UniProtKB-ARBA"/>
</dbReference>
<dbReference type="GO" id="GO:1990904">
    <property type="term" value="C:ribonucleoprotein complex"/>
    <property type="evidence" value="ECO:0007669"/>
    <property type="project" value="UniProtKB-KW"/>
</dbReference>
<dbReference type="GO" id="GO:0005840">
    <property type="term" value="C:ribosome"/>
    <property type="evidence" value="ECO:0007669"/>
    <property type="project" value="UniProtKB-KW"/>
</dbReference>
<dbReference type="GO" id="GO:0019843">
    <property type="term" value="F:rRNA binding"/>
    <property type="evidence" value="ECO:0007669"/>
    <property type="project" value="UniProtKB-UniRule"/>
</dbReference>
<dbReference type="GO" id="GO:0003735">
    <property type="term" value="F:structural constituent of ribosome"/>
    <property type="evidence" value="ECO:0007669"/>
    <property type="project" value="InterPro"/>
</dbReference>
<dbReference type="GO" id="GO:0006412">
    <property type="term" value="P:translation"/>
    <property type="evidence" value="ECO:0007669"/>
    <property type="project" value="UniProtKB-UniRule"/>
</dbReference>
<dbReference type="HAMAP" id="MF_01363">
    <property type="entry name" value="Ribosomal_bL21"/>
    <property type="match status" value="1"/>
</dbReference>
<dbReference type="InterPro" id="IPR028909">
    <property type="entry name" value="bL21-like"/>
</dbReference>
<dbReference type="InterPro" id="IPR036164">
    <property type="entry name" value="bL21-like_sf"/>
</dbReference>
<dbReference type="InterPro" id="IPR001787">
    <property type="entry name" value="Ribosomal_bL21"/>
</dbReference>
<dbReference type="InterPro" id="IPR018258">
    <property type="entry name" value="Ribosomal_bL21_CS"/>
</dbReference>
<dbReference type="NCBIfam" id="TIGR00061">
    <property type="entry name" value="L21"/>
    <property type="match status" value="1"/>
</dbReference>
<dbReference type="PANTHER" id="PTHR21349">
    <property type="entry name" value="50S RIBOSOMAL PROTEIN L21"/>
    <property type="match status" value="1"/>
</dbReference>
<dbReference type="PANTHER" id="PTHR21349:SF0">
    <property type="entry name" value="LARGE RIBOSOMAL SUBUNIT PROTEIN BL21M"/>
    <property type="match status" value="1"/>
</dbReference>
<dbReference type="Pfam" id="PF00829">
    <property type="entry name" value="Ribosomal_L21p"/>
    <property type="match status" value="1"/>
</dbReference>
<dbReference type="SUPFAM" id="SSF141091">
    <property type="entry name" value="L21p-like"/>
    <property type="match status" value="1"/>
</dbReference>
<dbReference type="PROSITE" id="PS01169">
    <property type="entry name" value="RIBOSOMAL_L21"/>
    <property type="match status" value="1"/>
</dbReference>
<evidence type="ECO:0000255" key="1">
    <source>
        <dbReference type="HAMAP-Rule" id="MF_01363"/>
    </source>
</evidence>
<evidence type="ECO:0000305" key="2"/>
<feature type="chain" id="PRO_1000067905" description="Large ribosomal subunit protein bL21">
    <location>
        <begin position="1"/>
        <end position="104"/>
    </location>
</feature>
<sequence>MSTYAIIKTGGKQVKVEVGQAVYVEKLNVEAGQEVTFNEVVLVGGENTVVGTPLVAGATVVGTVEKQGKQKKVVTYKYKPKKGSHRKQGHRQPYTKVVINAINA</sequence>
<keyword id="KW-1185">Reference proteome</keyword>
<keyword id="KW-0687">Ribonucleoprotein</keyword>
<keyword id="KW-0689">Ribosomal protein</keyword>
<keyword id="KW-0694">RNA-binding</keyword>
<keyword id="KW-0699">rRNA-binding</keyword>
<name>RL21_STRP2</name>
<accession>Q04KI4</accession>
<comment type="function">
    <text evidence="1">This protein binds to 23S rRNA in the presence of protein L20.</text>
</comment>
<comment type="subunit">
    <text evidence="1">Part of the 50S ribosomal subunit. Contacts protein L20.</text>
</comment>
<comment type="similarity">
    <text evidence="1">Belongs to the bacterial ribosomal protein bL21 family.</text>
</comment>
<gene>
    <name evidence="1" type="primary">rplU</name>
    <name type="ordered locus">SPD_0989</name>
</gene>